<comment type="function">
    <text evidence="1">Provides the (R)-glutamate required for cell wall biosynthesis.</text>
</comment>
<comment type="catalytic activity">
    <reaction evidence="1">
        <text>L-glutamate = D-glutamate</text>
        <dbReference type="Rhea" id="RHEA:12813"/>
        <dbReference type="ChEBI" id="CHEBI:29985"/>
        <dbReference type="ChEBI" id="CHEBI:29986"/>
        <dbReference type="EC" id="5.1.1.3"/>
    </reaction>
</comment>
<comment type="pathway">
    <text evidence="1">Cell wall biogenesis; peptidoglycan biosynthesis.</text>
</comment>
<comment type="similarity">
    <text evidence="1">Belongs to the aspartate/glutamate racemases family.</text>
</comment>
<dbReference type="EC" id="5.1.1.3" evidence="1"/>
<dbReference type="EMBL" id="AE002098">
    <property type="protein sequence ID" value="AAF40895.1"/>
    <property type="molecule type" value="Genomic_DNA"/>
</dbReference>
<dbReference type="PIR" id="C81196">
    <property type="entry name" value="C81196"/>
</dbReference>
<dbReference type="RefSeq" id="NP_273505.1">
    <property type="nucleotide sequence ID" value="NC_003112.2"/>
</dbReference>
<dbReference type="RefSeq" id="WP_002223465.1">
    <property type="nucleotide sequence ID" value="NC_003112.2"/>
</dbReference>
<dbReference type="SMR" id="P0A0R0"/>
<dbReference type="FunCoup" id="P0A0R0">
    <property type="interactions" value="195"/>
</dbReference>
<dbReference type="STRING" id="122586.NMB0458"/>
<dbReference type="PaxDb" id="122586-NMB0458"/>
<dbReference type="GeneID" id="93387553"/>
<dbReference type="KEGG" id="nme:NMB0458"/>
<dbReference type="PATRIC" id="fig|122586.8.peg.582"/>
<dbReference type="HOGENOM" id="CLU_052344_0_2_4"/>
<dbReference type="InParanoid" id="P0A0R0"/>
<dbReference type="OrthoDB" id="9801055at2"/>
<dbReference type="UniPathway" id="UPA00219"/>
<dbReference type="Proteomes" id="UP000000425">
    <property type="component" value="Chromosome"/>
</dbReference>
<dbReference type="GO" id="GO:0008881">
    <property type="term" value="F:glutamate racemase activity"/>
    <property type="evidence" value="ECO:0000318"/>
    <property type="project" value="GO_Central"/>
</dbReference>
<dbReference type="GO" id="GO:0071555">
    <property type="term" value="P:cell wall organization"/>
    <property type="evidence" value="ECO:0007669"/>
    <property type="project" value="UniProtKB-KW"/>
</dbReference>
<dbReference type="GO" id="GO:0009252">
    <property type="term" value="P:peptidoglycan biosynthetic process"/>
    <property type="evidence" value="ECO:0000318"/>
    <property type="project" value="GO_Central"/>
</dbReference>
<dbReference type="GO" id="GO:0008360">
    <property type="term" value="P:regulation of cell shape"/>
    <property type="evidence" value="ECO:0007669"/>
    <property type="project" value="UniProtKB-KW"/>
</dbReference>
<dbReference type="FunFam" id="3.40.50.1860:FF:000002">
    <property type="entry name" value="Glutamate racemase"/>
    <property type="match status" value="1"/>
</dbReference>
<dbReference type="Gene3D" id="3.40.50.1860">
    <property type="match status" value="2"/>
</dbReference>
<dbReference type="HAMAP" id="MF_00258">
    <property type="entry name" value="Glu_racemase"/>
    <property type="match status" value="1"/>
</dbReference>
<dbReference type="InterPro" id="IPR015942">
    <property type="entry name" value="Asp/Glu/hydantoin_racemase"/>
</dbReference>
<dbReference type="InterPro" id="IPR001920">
    <property type="entry name" value="Asp/Glu_race"/>
</dbReference>
<dbReference type="InterPro" id="IPR033134">
    <property type="entry name" value="Asp/Glu_racemase_AS_2"/>
</dbReference>
<dbReference type="InterPro" id="IPR004391">
    <property type="entry name" value="Glu_race"/>
</dbReference>
<dbReference type="NCBIfam" id="TIGR00067">
    <property type="entry name" value="glut_race"/>
    <property type="match status" value="1"/>
</dbReference>
<dbReference type="PANTHER" id="PTHR21198">
    <property type="entry name" value="GLUTAMATE RACEMASE"/>
    <property type="match status" value="1"/>
</dbReference>
<dbReference type="PANTHER" id="PTHR21198:SF2">
    <property type="entry name" value="GLUTAMATE RACEMASE"/>
    <property type="match status" value="1"/>
</dbReference>
<dbReference type="Pfam" id="PF01177">
    <property type="entry name" value="Asp_Glu_race"/>
    <property type="match status" value="1"/>
</dbReference>
<dbReference type="SUPFAM" id="SSF53681">
    <property type="entry name" value="Aspartate/glutamate racemase"/>
    <property type="match status" value="2"/>
</dbReference>
<dbReference type="PROSITE" id="PS00924">
    <property type="entry name" value="ASP_GLU_RACEMASE_2"/>
    <property type="match status" value="1"/>
</dbReference>
<accession>P0A0R0</accession>
<accession>Q9RQW7</accession>
<keyword id="KW-0133">Cell shape</keyword>
<keyword id="KW-0961">Cell wall biogenesis/degradation</keyword>
<keyword id="KW-0413">Isomerase</keyword>
<keyword id="KW-0573">Peptidoglycan synthesis</keyword>
<keyword id="KW-1185">Reference proteome</keyword>
<protein>
    <recommendedName>
        <fullName evidence="1">Glutamate racemase</fullName>
        <ecNumber evidence="1">5.1.1.3</ecNumber>
    </recommendedName>
</protein>
<sequence>MENIGRQRPIGVFDSGIGGLTNVRALMERLPMENIIYFGDTARVPYGTKSKATIENFSMQIVDFLLEHDVKAMVIACNTIAAVAGQKIRQKTGNMPVLDVISAGAKAALATTRNNKIGIIATNTTVNSNAYARAIHRNNPDTLVRTQAAPLLVPLVEEGWLEHEVTRLTVCEYLKPLLADGIDTLVLGCTHFPLLKPLIGREAGNVALVDSAITTAEETARVLAQEGLLNTDNNNPDYRFYVSDIPLKFRTIGERFLGRTMEQIEMVSLG</sequence>
<gene>
    <name evidence="1" type="primary">murI</name>
    <name type="synonym">glr</name>
    <name type="ordered locus">NMB0458</name>
</gene>
<name>MURI_NEIMB</name>
<reference key="1">
    <citation type="journal article" date="2000" name="Science">
        <title>Complete genome sequence of Neisseria meningitidis serogroup B strain MC58.</title>
        <authorList>
            <person name="Tettelin H."/>
            <person name="Saunders N.J."/>
            <person name="Heidelberg J.F."/>
            <person name="Jeffries A.C."/>
            <person name="Nelson K.E."/>
            <person name="Eisen J.A."/>
            <person name="Ketchum K.A."/>
            <person name="Hood D.W."/>
            <person name="Peden J.F."/>
            <person name="Dodson R.J."/>
            <person name="Nelson W.C."/>
            <person name="Gwinn M.L."/>
            <person name="DeBoy R.T."/>
            <person name="Peterson J.D."/>
            <person name="Hickey E.K."/>
            <person name="Haft D.H."/>
            <person name="Salzberg S.L."/>
            <person name="White O."/>
            <person name="Fleischmann R.D."/>
            <person name="Dougherty B.A."/>
            <person name="Mason T.M."/>
            <person name="Ciecko A."/>
            <person name="Parksey D.S."/>
            <person name="Blair E."/>
            <person name="Cittone H."/>
            <person name="Clark E.B."/>
            <person name="Cotton M.D."/>
            <person name="Utterback T.R."/>
            <person name="Khouri H.M."/>
            <person name="Qin H."/>
            <person name="Vamathevan J.J."/>
            <person name="Gill J."/>
            <person name="Scarlato V."/>
            <person name="Masignani V."/>
            <person name="Pizza M."/>
            <person name="Grandi G."/>
            <person name="Sun L."/>
            <person name="Smith H.O."/>
            <person name="Fraser C.M."/>
            <person name="Moxon E.R."/>
            <person name="Rappuoli R."/>
            <person name="Venter J.C."/>
        </authorList>
    </citation>
    <scope>NUCLEOTIDE SEQUENCE [LARGE SCALE GENOMIC DNA]</scope>
    <source>
        <strain>ATCC BAA-335 / MC58</strain>
    </source>
</reference>
<organism>
    <name type="scientific">Neisseria meningitidis serogroup B (strain ATCC BAA-335 / MC58)</name>
    <dbReference type="NCBI Taxonomy" id="122586"/>
    <lineage>
        <taxon>Bacteria</taxon>
        <taxon>Pseudomonadati</taxon>
        <taxon>Pseudomonadota</taxon>
        <taxon>Betaproteobacteria</taxon>
        <taxon>Neisseriales</taxon>
        <taxon>Neisseriaceae</taxon>
        <taxon>Neisseria</taxon>
    </lineage>
</organism>
<feature type="chain" id="PRO_0000095492" description="Glutamate racemase">
    <location>
        <begin position="1"/>
        <end position="270"/>
    </location>
</feature>
<feature type="active site" description="Proton donor/acceptor" evidence="1">
    <location>
        <position position="77"/>
    </location>
</feature>
<feature type="active site" description="Proton donor/acceptor" evidence="1">
    <location>
        <position position="189"/>
    </location>
</feature>
<feature type="binding site" evidence="1">
    <location>
        <begin position="14"/>
        <end position="15"/>
    </location>
    <ligand>
        <name>substrate</name>
    </ligand>
</feature>
<feature type="binding site" evidence="1">
    <location>
        <begin position="46"/>
        <end position="47"/>
    </location>
    <ligand>
        <name>substrate</name>
    </ligand>
</feature>
<feature type="binding site" evidence="1">
    <location>
        <begin position="78"/>
        <end position="79"/>
    </location>
    <ligand>
        <name>substrate</name>
    </ligand>
</feature>
<feature type="binding site" evidence="1">
    <location>
        <begin position="190"/>
        <end position="191"/>
    </location>
    <ligand>
        <name>substrate</name>
    </ligand>
</feature>
<proteinExistence type="inferred from homology"/>
<evidence type="ECO:0000255" key="1">
    <source>
        <dbReference type="HAMAP-Rule" id="MF_00258"/>
    </source>
</evidence>